<reference key="1">
    <citation type="journal article" date="2009" name="PLoS ONE">
        <title>Genome sequence of the pathogenic intestinal spirochete Brachyspira hyodysenteriae reveals adaptations to its lifestyle in the porcine large intestine.</title>
        <authorList>
            <person name="Bellgard M.I."/>
            <person name="Wanchanthuek P."/>
            <person name="La T."/>
            <person name="Ryan K."/>
            <person name="Moolhuijzen P."/>
            <person name="Albertyn Z."/>
            <person name="Shaban B."/>
            <person name="Motro Y."/>
            <person name="Dunn D.S."/>
            <person name="Schibeci D."/>
            <person name="Hunter A."/>
            <person name="Barrero R."/>
            <person name="Phillips N.D."/>
            <person name="Hampson D.J."/>
        </authorList>
    </citation>
    <scope>NUCLEOTIDE SEQUENCE [LARGE SCALE GENOMIC DNA]</scope>
    <source>
        <strain>ATCC 49526 / WA1</strain>
    </source>
</reference>
<evidence type="ECO:0000255" key="1">
    <source>
        <dbReference type="HAMAP-Rule" id="MF_00086"/>
    </source>
</evidence>
<name>METK_BRAHW</name>
<dbReference type="EC" id="2.5.1.6" evidence="1"/>
<dbReference type="EMBL" id="CP001357">
    <property type="protein sequence ID" value="ACN84873.1"/>
    <property type="molecule type" value="Genomic_DNA"/>
</dbReference>
<dbReference type="SMR" id="C0QXK7"/>
<dbReference type="STRING" id="565034.BHWA1_02419"/>
<dbReference type="KEGG" id="bhy:BHWA1_02419"/>
<dbReference type="eggNOG" id="COG0192">
    <property type="taxonomic scope" value="Bacteria"/>
</dbReference>
<dbReference type="HOGENOM" id="CLU_041802_1_1_12"/>
<dbReference type="UniPathway" id="UPA00315">
    <property type="reaction ID" value="UER00080"/>
</dbReference>
<dbReference type="Proteomes" id="UP000001803">
    <property type="component" value="Chromosome"/>
</dbReference>
<dbReference type="GO" id="GO:0005737">
    <property type="term" value="C:cytoplasm"/>
    <property type="evidence" value="ECO:0007669"/>
    <property type="project" value="UniProtKB-SubCell"/>
</dbReference>
<dbReference type="GO" id="GO:0005524">
    <property type="term" value="F:ATP binding"/>
    <property type="evidence" value="ECO:0007669"/>
    <property type="project" value="UniProtKB-UniRule"/>
</dbReference>
<dbReference type="GO" id="GO:0000287">
    <property type="term" value="F:magnesium ion binding"/>
    <property type="evidence" value="ECO:0007669"/>
    <property type="project" value="UniProtKB-UniRule"/>
</dbReference>
<dbReference type="GO" id="GO:0004478">
    <property type="term" value="F:methionine adenosyltransferase activity"/>
    <property type="evidence" value="ECO:0007669"/>
    <property type="project" value="UniProtKB-UniRule"/>
</dbReference>
<dbReference type="GO" id="GO:0006730">
    <property type="term" value="P:one-carbon metabolic process"/>
    <property type="evidence" value="ECO:0007669"/>
    <property type="project" value="UniProtKB-KW"/>
</dbReference>
<dbReference type="GO" id="GO:0006556">
    <property type="term" value="P:S-adenosylmethionine biosynthetic process"/>
    <property type="evidence" value="ECO:0007669"/>
    <property type="project" value="UniProtKB-UniRule"/>
</dbReference>
<dbReference type="CDD" id="cd18079">
    <property type="entry name" value="S-AdoMet_synt"/>
    <property type="match status" value="1"/>
</dbReference>
<dbReference type="FunFam" id="3.30.300.10:FF:000003">
    <property type="entry name" value="S-adenosylmethionine synthase"/>
    <property type="match status" value="1"/>
</dbReference>
<dbReference type="Gene3D" id="3.30.300.10">
    <property type="match status" value="3"/>
</dbReference>
<dbReference type="HAMAP" id="MF_00086">
    <property type="entry name" value="S_AdoMet_synth1"/>
    <property type="match status" value="1"/>
</dbReference>
<dbReference type="InterPro" id="IPR022631">
    <property type="entry name" value="ADOMET_SYNTHASE_CS"/>
</dbReference>
<dbReference type="InterPro" id="IPR022630">
    <property type="entry name" value="S-AdoMet_synt_C"/>
</dbReference>
<dbReference type="InterPro" id="IPR022629">
    <property type="entry name" value="S-AdoMet_synt_central"/>
</dbReference>
<dbReference type="InterPro" id="IPR022628">
    <property type="entry name" value="S-AdoMet_synt_N"/>
</dbReference>
<dbReference type="InterPro" id="IPR002133">
    <property type="entry name" value="S-AdoMet_synthetase"/>
</dbReference>
<dbReference type="InterPro" id="IPR022636">
    <property type="entry name" value="S-AdoMet_synthetase_sfam"/>
</dbReference>
<dbReference type="NCBIfam" id="TIGR01034">
    <property type="entry name" value="metK"/>
    <property type="match status" value="1"/>
</dbReference>
<dbReference type="PANTHER" id="PTHR11964">
    <property type="entry name" value="S-ADENOSYLMETHIONINE SYNTHETASE"/>
    <property type="match status" value="1"/>
</dbReference>
<dbReference type="Pfam" id="PF02773">
    <property type="entry name" value="S-AdoMet_synt_C"/>
    <property type="match status" value="1"/>
</dbReference>
<dbReference type="Pfam" id="PF02772">
    <property type="entry name" value="S-AdoMet_synt_M"/>
    <property type="match status" value="1"/>
</dbReference>
<dbReference type="Pfam" id="PF00438">
    <property type="entry name" value="S-AdoMet_synt_N"/>
    <property type="match status" value="1"/>
</dbReference>
<dbReference type="PIRSF" id="PIRSF000497">
    <property type="entry name" value="MAT"/>
    <property type="match status" value="1"/>
</dbReference>
<dbReference type="SUPFAM" id="SSF55973">
    <property type="entry name" value="S-adenosylmethionine synthetase"/>
    <property type="match status" value="3"/>
</dbReference>
<dbReference type="PROSITE" id="PS00376">
    <property type="entry name" value="ADOMET_SYNTHASE_1"/>
    <property type="match status" value="1"/>
</dbReference>
<dbReference type="PROSITE" id="PS00377">
    <property type="entry name" value="ADOMET_SYNTHASE_2"/>
    <property type="match status" value="1"/>
</dbReference>
<accession>C0QXK7</accession>
<keyword id="KW-0067">ATP-binding</keyword>
<keyword id="KW-0963">Cytoplasm</keyword>
<keyword id="KW-0460">Magnesium</keyword>
<keyword id="KW-0479">Metal-binding</keyword>
<keyword id="KW-0547">Nucleotide-binding</keyword>
<keyword id="KW-0554">One-carbon metabolism</keyword>
<keyword id="KW-0630">Potassium</keyword>
<keyword id="KW-0808">Transferase</keyword>
<protein>
    <recommendedName>
        <fullName evidence="1">S-adenosylmethionine synthase</fullName>
        <shortName evidence="1">AdoMet synthase</shortName>
        <ecNumber evidence="1">2.5.1.6</ecNumber>
    </recommendedName>
    <alternativeName>
        <fullName evidence="1">MAT</fullName>
    </alternativeName>
    <alternativeName>
        <fullName evidence="1">Methionine adenosyltransferase</fullName>
    </alternativeName>
</protein>
<organism>
    <name type="scientific">Brachyspira hyodysenteriae (strain ATCC 49526 / WA1)</name>
    <dbReference type="NCBI Taxonomy" id="565034"/>
    <lineage>
        <taxon>Bacteria</taxon>
        <taxon>Pseudomonadati</taxon>
        <taxon>Spirochaetota</taxon>
        <taxon>Spirochaetia</taxon>
        <taxon>Brachyspirales</taxon>
        <taxon>Brachyspiraceae</taxon>
        <taxon>Brachyspira</taxon>
    </lineage>
</organism>
<feature type="chain" id="PRO_1000196693" description="S-adenosylmethionine synthase">
    <location>
        <begin position="1"/>
        <end position="394"/>
    </location>
</feature>
<feature type="region of interest" description="Flexible loop" evidence="1">
    <location>
        <begin position="102"/>
        <end position="112"/>
    </location>
</feature>
<feature type="binding site" description="in other chain" evidence="1">
    <location>
        <position position="18"/>
    </location>
    <ligand>
        <name>ATP</name>
        <dbReference type="ChEBI" id="CHEBI:30616"/>
        <note>ligand shared between two neighboring subunits</note>
    </ligand>
</feature>
<feature type="binding site" evidence="1">
    <location>
        <position position="20"/>
    </location>
    <ligand>
        <name>Mg(2+)</name>
        <dbReference type="ChEBI" id="CHEBI:18420"/>
    </ligand>
</feature>
<feature type="binding site" evidence="1">
    <location>
        <position position="46"/>
    </location>
    <ligand>
        <name>K(+)</name>
        <dbReference type="ChEBI" id="CHEBI:29103"/>
    </ligand>
</feature>
<feature type="binding site" description="in other chain" evidence="1">
    <location>
        <position position="59"/>
    </location>
    <ligand>
        <name>L-methionine</name>
        <dbReference type="ChEBI" id="CHEBI:57844"/>
        <note>ligand shared between two neighboring subunits</note>
    </ligand>
</feature>
<feature type="binding site" description="in other chain" evidence="1">
    <location>
        <position position="102"/>
    </location>
    <ligand>
        <name>L-methionine</name>
        <dbReference type="ChEBI" id="CHEBI:57844"/>
        <note>ligand shared between two neighboring subunits</note>
    </ligand>
</feature>
<feature type="binding site" description="in other chain" evidence="1">
    <location>
        <begin position="175"/>
        <end position="177"/>
    </location>
    <ligand>
        <name>ATP</name>
        <dbReference type="ChEBI" id="CHEBI:30616"/>
        <note>ligand shared between two neighboring subunits</note>
    </ligand>
</feature>
<feature type="binding site" evidence="1">
    <location>
        <position position="250"/>
    </location>
    <ligand>
        <name>ATP</name>
        <dbReference type="ChEBI" id="CHEBI:30616"/>
        <note>ligand shared between two neighboring subunits</note>
    </ligand>
</feature>
<feature type="binding site" evidence="1">
    <location>
        <position position="250"/>
    </location>
    <ligand>
        <name>L-methionine</name>
        <dbReference type="ChEBI" id="CHEBI:57844"/>
        <note>ligand shared between two neighboring subunits</note>
    </ligand>
</feature>
<feature type="binding site" description="in other chain" evidence="1">
    <location>
        <begin position="256"/>
        <end position="257"/>
    </location>
    <ligand>
        <name>ATP</name>
        <dbReference type="ChEBI" id="CHEBI:30616"/>
        <note>ligand shared between two neighboring subunits</note>
    </ligand>
</feature>
<feature type="binding site" evidence="1">
    <location>
        <position position="273"/>
    </location>
    <ligand>
        <name>ATP</name>
        <dbReference type="ChEBI" id="CHEBI:30616"/>
        <note>ligand shared between two neighboring subunits</note>
    </ligand>
</feature>
<feature type="binding site" evidence="1">
    <location>
        <position position="277"/>
    </location>
    <ligand>
        <name>ATP</name>
        <dbReference type="ChEBI" id="CHEBI:30616"/>
        <note>ligand shared between two neighboring subunits</note>
    </ligand>
</feature>
<feature type="binding site" description="in other chain" evidence="1">
    <location>
        <position position="281"/>
    </location>
    <ligand>
        <name>L-methionine</name>
        <dbReference type="ChEBI" id="CHEBI:57844"/>
        <note>ligand shared between two neighboring subunits</note>
    </ligand>
</feature>
<sequence>MAEIKNYYFSSESVTEGHPDKICDAVSDAVLDECLKQDPNSRVACETLAKTGMIMIAGEITTKAKLDYQKIARDTVRRIGYTSSDMGFDADTCAVMESIAEQSPDIDMGVSAGKGLFNSESSNVSEGAGDQGIMFGYAINETETFMPLTIHLAHRLAERLTKVRKDKVVDYLRPDGKSQVTVEYKDGKAARIEAVVISTQHAAGVDHKQIEADIKKYVINEICPANMLDSNTKYYINPTGSFVVGGPMGDCGLTGRKIIVDSYGGHGAHGGGAFSGKDPTKVDRSACYMARYVAKNIVASGIADRALVQFAYAIGVPEPLSVYVNTFGTAKVHDEVLANIVSKELDLTPAGIIKRLDLRRPIYEKTTAYGHFGRELPEFTWEKTDIKDLFANAK</sequence>
<gene>
    <name evidence="1" type="primary">metK</name>
    <name type="ordered locus">BHWA1_02419</name>
</gene>
<comment type="function">
    <text evidence="1">Catalyzes the formation of S-adenosylmethionine (AdoMet) from methionine and ATP. The overall synthetic reaction is composed of two sequential steps, AdoMet formation and the subsequent tripolyphosphate hydrolysis which occurs prior to release of AdoMet from the enzyme.</text>
</comment>
<comment type="catalytic activity">
    <reaction evidence="1">
        <text>L-methionine + ATP + H2O = S-adenosyl-L-methionine + phosphate + diphosphate</text>
        <dbReference type="Rhea" id="RHEA:21080"/>
        <dbReference type="ChEBI" id="CHEBI:15377"/>
        <dbReference type="ChEBI" id="CHEBI:30616"/>
        <dbReference type="ChEBI" id="CHEBI:33019"/>
        <dbReference type="ChEBI" id="CHEBI:43474"/>
        <dbReference type="ChEBI" id="CHEBI:57844"/>
        <dbReference type="ChEBI" id="CHEBI:59789"/>
        <dbReference type="EC" id="2.5.1.6"/>
    </reaction>
</comment>
<comment type="cofactor">
    <cofactor evidence="1">
        <name>Mg(2+)</name>
        <dbReference type="ChEBI" id="CHEBI:18420"/>
    </cofactor>
    <text evidence="1">Binds 2 divalent ions per subunit.</text>
</comment>
<comment type="cofactor">
    <cofactor evidence="1">
        <name>K(+)</name>
        <dbReference type="ChEBI" id="CHEBI:29103"/>
    </cofactor>
    <text evidence="1">Binds 1 potassium ion per subunit.</text>
</comment>
<comment type="pathway">
    <text evidence="1">Amino-acid biosynthesis; S-adenosyl-L-methionine biosynthesis; S-adenosyl-L-methionine from L-methionine: step 1/1.</text>
</comment>
<comment type="subunit">
    <text evidence="1">Homotetramer; dimer of dimers.</text>
</comment>
<comment type="subcellular location">
    <subcellularLocation>
        <location evidence="1">Cytoplasm</location>
    </subcellularLocation>
</comment>
<comment type="similarity">
    <text evidence="1">Belongs to the AdoMet synthase family.</text>
</comment>
<proteinExistence type="inferred from homology"/>